<accession>Q5M1Y6</accession>
<keyword id="KW-0227">DNA damage</keyword>
<keyword id="KW-0234">DNA repair</keyword>
<evidence type="ECO:0000255" key="1">
    <source>
        <dbReference type="HAMAP-Rule" id="MF_00149"/>
    </source>
</evidence>
<evidence type="ECO:0000256" key="2">
    <source>
        <dbReference type="SAM" id="MobiDB-lite"/>
    </source>
</evidence>
<protein>
    <recommendedName>
        <fullName evidence="1">DNA mismatch repair protein MutL</fullName>
    </recommendedName>
</protein>
<sequence length="647" mass="72505">MPKIIELPEVLANQIAAGEVVERPASVVKELVENAIDAGSTQITIEVEESGLSKIQITDNGEGMAQADVAMSLRRHATSKIKNQGDLFRIRTLGFRGEALPSIASISHLTIVTAADGEVYGTKLVAKGGEIESQDPISTPVGTKITVENLFYNTPARLKYMKSLQAELAHIVDVVNRLSLAHPEVAFTLLNDGRQLTQTSGTGDLRQAIAGIYGLTTAKKMVEISNSDLDFEVSGYVSLPELTRANRNYITILINGRYIKNFLLNRAIFDGYGSKLMVGRFPIAVIDIQIDPYLADVNVHPTKQEVRISKEKELMALIKSAIAQSLREQDLIPDALENLAKSSTRGATRSVQTSLPLKQTNLYYDSSRNDFFVTPETVQEDIKPLVSKSESSVSLVANKQQPTVKQAKRSADDSDSEHGKLDYKNKSKLKRMLENLTNEETSTFPELEFFGQMHGTYLFAQGQGGLYIIDQHAAQERVKYEYYREKIGVVDSSLQQLLVPYLFEFSGSDYISLQEKMPLLNQVCIYLEPYGNNTFILREHPIWMKEEEIESAVYEMCDMLLLTNEVSVKTYRAELAIMMSCKRSIKANHALDDYSARDLLVQLAQCKNPYNCPHGRPVLVNFTKSDMEKMFRRIQENHTSLRDLGKY</sequence>
<feature type="chain" id="PRO_1000010095" description="DNA mismatch repair protein MutL">
    <location>
        <begin position="1"/>
        <end position="647"/>
    </location>
</feature>
<feature type="region of interest" description="Disordered" evidence="2">
    <location>
        <begin position="393"/>
        <end position="423"/>
    </location>
</feature>
<feature type="compositionally biased region" description="Basic and acidic residues" evidence="2">
    <location>
        <begin position="409"/>
        <end position="423"/>
    </location>
</feature>
<organism>
    <name type="scientific">Streptococcus thermophilus (strain CNRZ 1066)</name>
    <dbReference type="NCBI Taxonomy" id="299768"/>
    <lineage>
        <taxon>Bacteria</taxon>
        <taxon>Bacillati</taxon>
        <taxon>Bacillota</taxon>
        <taxon>Bacilli</taxon>
        <taxon>Lactobacillales</taxon>
        <taxon>Streptococcaceae</taxon>
        <taxon>Streptococcus</taxon>
    </lineage>
</organism>
<comment type="function">
    <text evidence="1">This protein is involved in the repair of mismatches in DNA. It is required for dam-dependent methyl-directed DNA mismatch repair. May act as a 'molecular matchmaker', a protein that promotes the formation of a stable complex between two or more DNA-binding proteins in an ATP-dependent manner without itself being part of a final effector complex.</text>
</comment>
<comment type="similarity">
    <text evidence="1">Belongs to the DNA mismatch repair MutL/HexB family.</text>
</comment>
<reference key="1">
    <citation type="journal article" date="2004" name="Nat. Biotechnol.">
        <title>Complete sequence and comparative genome analysis of the dairy bacterium Streptococcus thermophilus.</title>
        <authorList>
            <person name="Bolotin A."/>
            <person name="Quinquis B."/>
            <person name="Renault P."/>
            <person name="Sorokin A."/>
            <person name="Ehrlich S.D."/>
            <person name="Kulakauskas S."/>
            <person name="Lapidus A."/>
            <person name="Goltsman E."/>
            <person name="Mazur M."/>
            <person name="Pusch G.D."/>
            <person name="Fonstein M."/>
            <person name="Overbeek R."/>
            <person name="Kyprides N."/>
            <person name="Purnelle B."/>
            <person name="Prozzi D."/>
            <person name="Ngui K."/>
            <person name="Masuy D."/>
            <person name="Hancy F."/>
            <person name="Burteau S."/>
            <person name="Boutry M."/>
            <person name="Delcour J."/>
            <person name="Goffeau A."/>
            <person name="Hols P."/>
        </authorList>
    </citation>
    <scope>NUCLEOTIDE SEQUENCE [LARGE SCALE GENOMIC DNA]</scope>
    <source>
        <strain>CNRZ 1066</strain>
    </source>
</reference>
<gene>
    <name evidence="1" type="primary">mutL</name>
    <name type="ordered locus">str0054</name>
</gene>
<proteinExistence type="inferred from homology"/>
<name>MUTL_STRT1</name>
<dbReference type="EMBL" id="CP000024">
    <property type="protein sequence ID" value="AAV61671.1"/>
    <property type="molecule type" value="Genomic_DNA"/>
</dbReference>
<dbReference type="RefSeq" id="WP_011225282.1">
    <property type="nucleotide sequence ID" value="NC_006449.1"/>
</dbReference>
<dbReference type="SMR" id="Q5M1Y6"/>
<dbReference type="GeneID" id="66897972"/>
<dbReference type="KEGG" id="stc:str0054"/>
<dbReference type="HOGENOM" id="CLU_004131_5_1_9"/>
<dbReference type="GO" id="GO:0032300">
    <property type="term" value="C:mismatch repair complex"/>
    <property type="evidence" value="ECO:0007669"/>
    <property type="project" value="InterPro"/>
</dbReference>
<dbReference type="GO" id="GO:0005524">
    <property type="term" value="F:ATP binding"/>
    <property type="evidence" value="ECO:0007669"/>
    <property type="project" value="InterPro"/>
</dbReference>
<dbReference type="GO" id="GO:0016887">
    <property type="term" value="F:ATP hydrolysis activity"/>
    <property type="evidence" value="ECO:0007669"/>
    <property type="project" value="InterPro"/>
</dbReference>
<dbReference type="GO" id="GO:0140664">
    <property type="term" value="F:ATP-dependent DNA damage sensor activity"/>
    <property type="evidence" value="ECO:0007669"/>
    <property type="project" value="InterPro"/>
</dbReference>
<dbReference type="GO" id="GO:0030983">
    <property type="term" value="F:mismatched DNA binding"/>
    <property type="evidence" value="ECO:0007669"/>
    <property type="project" value="InterPro"/>
</dbReference>
<dbReference type="GO" id="GO:0006298">
    <property type="term" value="P:mismatch repair"/>
    <property type="evidence" value="ECO:0007669"/>
    <property type="project" value="UniProtKB-UniRule"/>
</dbReference>
<dbReference type="CDD" id="cd16926">
    <property type="entry name" value="HATPase_MutL-MLH-PMS-like"/>
    <property type="match status" value="1"/>
</dbReference>
<dbReference type="CDD" id="cd00782">
    <property type="entry name" value="MutL_Trans"/>
    <property type="match status" value="1"/>
</dbReference>
<dbReference type="FunFam" id="3.30.1370.100:FF:000004">
    <property type="entry name" value="DNA mismatch repair endonuclease MutL"/>
    <property type="match status" value="1"/>
</dbReference>
<dbReference type="FunFam" id="3.30.565.10:FF:000003">
    <property type="entry name" value="DNA mismatch repair endonuclease MutL"/>
    <property type="match status" value="1"/>
</dbReference>
<dbReference type="Gene3D" id="3.30.230.10">
    <property type="match status" value="1"/>
</dbReference>
<dbReference type="Gene3D" id="3.30.565.10">
    <property type="entry name" value="Histidine kinase-like ATPase, C-terminal domain"/>
    <property type="match status" value="1"/>
</dbReference>
<dbReference type="Gene3D" id="3.30.1540.20">
    <property type="entry name" value="MutL, C-terminal domain, dimerisation subdomain"/>
    <property type="match status" value="1"/>
</dbReference>
<dbReference type="Gene3D" id="3.30.1370.100">
    <property type="entry name" value="MutL, C-terminal domain, regulatory subdomain"/>
    <property type="match status" value="1"/>
</dbReference>
<dbReference type="HAMAP" id="MF_00149">
    <property type="entry name" value="DNA_mis_repair"/>
    <property type="match status" value="1"/>
</dbReference>
<dbReference type="InterPro" id="IPR014762">
    <property type="entry name" value="DNA_mismatch_repair_CS"/>
</dbReference>
<dbReference type="InterPro" id="IPR020667">
    <property type="entry name" value="DNA_mismatch_repair_MutL"/>
</dbReference>
<dbReference type="InterPro" id="IPR013507">
    <property type="entry name" value="DNA_mismatch_S5_2-like"/>
</dbReference>
<dbReference type="InterPro" id="IPR036890">
    <property type="entry name" value="HATPase_C_sf"/>
</dbReference>
<dbReference type="InterPro" id="IPR002099">
    <property type="entry name" value="MutL/Mlh/PMS"/>
</dbReference>
<dbReference type="InterPro" id="IPR038973">
    <property type="entry name" value="MutL/Mlh/Pms-like"/>
</dbReference>
<dbReference type="InterPro" id="IPR014790">
    <property type="entry name" value="MutL_C"/>
</dbReference>
<dbReference type="InterPro" id="IPR042120">
    <property type="entry name" value="MutL_C_dimsub"/>
</dbReference>
<dbReference type="InterPro" id="IPR042121">
    <property type="entry name" value="MutL_C_regsub"/>
</dbReference>
<dbReference type="InterPro" id="IPR037198">
    <property type="entry name" value="MutL_C_sf"/>
</dbReference>
<dbReference type="InterPro" id="IPR020568">
    <property type="entry name" value="Ribosomal_Su5_D2-typ_SF"/>
</dbReference>
<dbReference type="InterPro" id="IPR014721">
    <property type="entry name" value="Ribsml_uS5_D2-typ_fold_subgr"/>
</dbReference>
<dbReference type="NCBIfam" id="TIGR00585">
    <property type="entry name" value="mutl"/>
    <property type="match status" value="1"/>
</dbReference>
<dbReference type="NCBIfam" id="NF000950">
    <property type="entry name" value="PRK00095.1-3"/>
    <property type="match status" value="1"/>
</dbReference>
<dbReference type="PANTHER" id="PTHR10073">
    <property type="entry name" value="DNA MISMATCH REPAIR PROTEIN MLH, PMS, MUTL"/>
    <property type="match status" value="1"/>
</dbReference>
<dbReference type="PANTHER" id="PTHR10073:SF12">
    <property type="entry name" value="DNA MISMATCH REPAIR PROTEIN MLH1"/>
    <property type="match status" value="1"/>
</dbReference>
<dbReference type="Pfam" id="PF01119">
    <property type="entry name" value="DNA_mis_repair"/>
    <property type="match status" value="1"/>
</dbReference>
<dbReference type="Pfam" id="PF13589">
    <property type="entry name" value="HATPase_c_3"/>
    <property type="match status" value="1"/>
</dbReference>
<dbReference type="Pfam" id="PF08676">
    <property type="entry name" value="MutL_C"/>
    <property type="match status" value="1"/>
</dbReference>
<dbReference type="SMART" id="SM01340">
    <property type="entry name" value="DNA_mis_repair"/>
    <property type="match status" value="1"/>
</dbReference>
<dbReference type="SMART" id="SM00853">
    <property type="entry name" value="MutL_C"/>
    <property type="match status" value="1"/>
</dbReference>
<dbReference type="SUPFAM" id="SSF55874">
    <property type="entry name" value="ATPase domain of HSP90 chaperone/DNA topoisomerase II/histidine kinase"/>
    <property type="match status" value="1"/>
</dbReference>
<dbReference type="SUPFAM" id="SSF118116">
    <property type="entry name" value="DNA mismatch repair protein MutL"/>
    <property type="match status" value="1"/>
</dbReference>
<dbReference type="SUPFAM" id="SSF54211">
    <property type="entry name" value="Ribosomal protein S5 domain 2-like"/>
    <property type="match status" value="1"/>
</dbReference>
<dbReference type="PROSITE" id="PS00058">
    <property type="entry name" value="DNA_MISMATCH_REPAIR_1"/>
    <property type="match status" value="1"/>
</dbReference>